<protein>
    <recommendedName>
        <fullName evidence="1">Antiholin-like protein LrgB</fullName>
    </recommendedName>
</protein>
<sequence length="233" mass="25097">MINHLALNTPYFGILLSVIPFFLATILFEKTNRFFLFAPLFVSMVFGVAFLYLTGIPYKTYKIGGDIIYFFLEPATICFAIPLYKKREVLVKHWHRIIGGIGIGTVVALLIILTFAKLAQFANDVILSMLPQAATTAIALPVSAGIGGIKELTSLAVILNGVIIYALGNKFLKLFRITNPIARGLALGTSGHTLGVAPAKELGPVEESMASIALVLVGVVVVAVVPVFVAIFF</sequence>
<name>LRGB_STAAT</name>
<feature type="chain" id="PRO_1000085035" description="Antiholin-like protein LrgB">
    <location>
        <begin position="1"/>
        <end position="233"/>
    </location>
</feature>
<feature type="transmembrane region" description="Helical" evidence="1">
    <location>
        <begin position="9"/>
        <end position="29"/>
    </location>
</feature>
<feature type="transmembrane region" description="Helical" evidence="1">
    <location>
        <begin position="34"/>
        <end position="54"/>
    </location>
</feature>
<feature type="transmembrane region" description="Helical" evidence="1">
    <location>
        <begin position="63"/>
        <end position="83"/>
    </location>
</feature>
<feature type="transmembrane region" description="Helical" evidence="1">
    <location>
        <begin position="97"/>
        <end position="117"/>
    </location>
</feature>
<feature type="transmembrane region" description="Helical" evidence="1">
    <location>
        <begin position="121"/>
        <end position="141"/>
    </location>
</feature>
<feature type="transmembrane region" description="Helical" evidence="1">
    <location>
        <begin position="144"/>
        <end position="164"/>
    </location>
</feature>
<feature type="transmembrane region" description="Helical" evidence="1">
    <location>
        <begin position="212"/>
        <end position="232"/>
    </location>
</feature>
<organism>
    <name type="scientific">Staphylococcus aureus (strain USA300 / TCH1516)</name>
    <dbReference type="NCBI Taxonomy" id="451516"/>
    <lineage>
        <taxon>Bacteria</taxon>
        <taxon>Bacillati</taxon>
        <taxon>Bacillota</taxon>
        <taxon>Bacilli</taxon>
        <taxon>Bacillales</taxon>
        <taxon>Staphylococcaceae</taxon>
        <taxon>Staphylococcus</taxon>
    </lineage>
</organism>
<comment type="function">
    <text evidence="1">Inhibits the expression or activity of extracellular murein hydrolases by interacting, possibly with LrgA, with the holin-like proteins CidA and/or CidB. The LrgAB and CidAB proteins may affect the proton motive force of the membrane. May be involved in programmed cell death (PCD), possibly triggering PCD in response to antibiotics and environmental stresses.</text>
</comment>
<comment type="subcellular location">
    <subcellularLocation>
        <location evidence="1">Cell membrane</location>
        <topology evidence="1">Multi-pass membrane protein</topology>
    </subcellularLocation>
</comment>
<comment type="similarity">
    <text evidence="1">Belongs to the CidB/LrgB family. LrgB subfamily.</text>
</comment>
<keyword id="KW-1003">Cell membrane</keyword>
<keyword id="KW-0204">Cytolysis</keyword>
<keyword id="KW-0472">Membrane</keyword>
<keyword id="KW-0812">Transmembrane</keyword>
<keyword id="KW-1133">Transmembrane helix</keyword>
<reference key="1">
    <citation type="journal article" date="2007" name="BMC Microbiol.">
        <title>Subtle genetic changes enhance virulence of methicillin resistant and sensitive Staphylococcus aureus.</title>
        <authorList>
            <person name="Highlander S.K."/>
            <person name="Hulten K.G."/>
            <person name="Qin X."/>
            <person name="Jiang H."/>
            <person name="Yerrapragada S."/>
            <person name="Mason E.O. Jr."/>
            <person name="Shang Y."/>
            <person name="Williams T.M."/>
            <person name="Fortunov R.M."/>
            <person name="Liu Y."/>
            <person name="Igboeli O."/>
            <person name="Petrosino J."/>
            <person name="Tirumalai M."/>
            <person name="Uzman A."/>
            <person name="Fox G.E."/>
            <person name="Cardenas A.M."/>
            <person name="Muzny D.M."/>
            <person name="Hemphill L."/>
            <person name="Ding Y."/>
            <person name="Dugan S."/>
            <person name="Blyth P.R."/>
            <person name="Buhay C.J."/>
            <person name="Dinh H.H."/>
            <person name="Hawes A.C."/>
            <person name="Holder M."/>
            <person name="Kovar C.L."/>
            <person name="Lee S.L."/>
            <person name="Liu W."/>
            <person name="Nazareth L.V."/>
            <person name="Wang Q."/>
            <person name="Zhou J."/>
            <person name="Kaplan S.L."/>
            <person name="Weinstock G.M."/>
        </authorList>
    </citation>
    <scope>NUCLEOTIDE SEQUENCE [LARGE SCALE GENOMIC DNA]</scope>
    <source>
        <strain>USA300 / TCH1516</strain>
    </source>
</reference>
<accession>A8Z0M6</accession>
<dbReference type="EMBL" id="CP000730">
    <property type="protein sequence ID" value="ABX28305.1"/>
    <property type="molecule type" value="Genomic_DNA"/>
</dbReference>
<dbReference type="RefSeq" id="WP_000607067.1">
    <property type="nucleotide sequence ID" value="NC_010079.1"/>
</dbReference>
<dbReference type="KEGG" id="sax:USA300HOU_0274"/>
<dbReference type="HOGENOM" id="CLU_082099_1_0_9"/>
<dbReference type="GO" id="GO:0005886">
    <property type="term" value="C:plasma membrane"/>
    <property type="evidence" value="ECO:0007669"/>
    <property type="project" value="UniProtKB-SubCell"/>
</dbReference>
<dbReference type="GO" id="GO:0019835">
    <property type="term" value="P:cytolysis"/>
    <property type="evidence" value="ECO:0007669"/>
    <property type="project" value="UniProtKB-UniRule"/>
</dbReference>
<dbReference type="GO" id="GO:0031640">
    <property type="term" value="P:killing of cells of another organism"/>
    <property type="evidence" value="ECO:0007669"/>
    <property type="project" value="UniProtKB-KW"/>
</dbReference>
<dbReference type="GO" id="GO:0012501">
    <property type="term" value="P:programmed cell death"/>
    <property type="evidence" value="ECO:0007669"/>
    <property type="project" value="UniProtKB-UniRule"/>
</dbReference>
<dbReference type="HAMAP" id="MF_01142">
    <property type="entry name" value="LrgB"/>
    <property type="match status" value="1"/>
</dbReference>
<dbReference type="InterPro" id="IPR024891">
    <property type="entry name" value="Antiholin-like_LrgB"/>
</dbReference>
<dbReference type="InterPro" id="IPR007300">
    <property type="entry name" value="CidB/LrgB"/>
</dbReference>
<dbReference type="NCBIfam" id="NF003291">
    <property type="entry name" value="PRK04288.1"/>
    <property type="match status" value="1"/>
</dbReference>
<dbReference type="PANTHER" id="PTHR30249:SF0">
    <property type="entry name" value="PLASTIDAL GLYCOLATE_GLYCERATE TRANSLOCATOR 1, CHLOROPLASTIC"/>
    <property type="match status" value="1"/>
</dbReference>
<dbReference type="PANTHER" id="PTHR30249">
    <property type="entry name" value="PUTATIVE SEROTONIN TRANSPORTER"/>
    <property type="match status" value="1"/>
</dbReference>
<dbReference type="Pfam" id="PF04172">
    <property type="entry name" value="LrgB"/>
    <property type="match status" value="1"/>
</dbReference>
<gene>
    <name evidence="1" type="primary">lrgB</name>
    <name type="ordered locus">USA300HOU_0274</name>
</gene>
<proteinExistence type="inferred from homology"/>
<evidence type="ECO:0000255" key="1">
    <source>
        <dbReference type="HAMAP-Rule" id="MF_01142"/>
    </source>
</evidence>